<reference key="1">
    <citation type="journal article" date="1998" name="Science">
        <title>Genome sequence of an obligate intracellular pathogen of humans: Chlamydia trachomatis.</title>
        <authorList>
            <person name="Stephens R.S."/>
            <person name="Kalman S."/>
            <person name="Lammel C.J."/>
            <person name="Fan J."/>
            <person name="Marathe R."/>
            <person name="Aravind L."/>
            <person name="Mitchell W.P."/>
            <person name="Olinger L."/>
            <person name="Tatusov R.L."/>
            <person name="Zhao Q."/>
            <person name="Koonin E.V."/>
            <person name="Davis R.W."/>
        </authorList>
    </citation>
    <scope>NUCLEOTIDE SEQUENCE [LARGE SCALE GENOMIC DNA]</scope>
    <source>
        <strain>ATCC VR-885 / DSM 19411 / UW-3/Cx</strain>
    </source>
</reference>
<accession>P0CE21</accession>
<accession>O84336</accession>
<accession>P94685</accession>
<evidence type="ECO:0000250" key="1"/>
<evidence type="ECO:0000250" key="2">
    <source>
        <dbReference type="UniProtKB" id="P14618"/>
    </source>
</evidence>
<evidence type="ECO:0000305" key="3"/>
<sequence>MIARTKIICTIGPATNTPEMLEKLLDAGMNVARLNFSHGTHESHGRTIAILKELREKRQVPLAIMLDTKGPEIRLGQVESPIKVQPGDRLTLVSKEILGSKESGVTLYPSCVFPYVRERAPVLIDDGYIQAVVVNAQEHMVEIEFQNSGEIKSNKSLSIKDIDVALPFMTEKDIADLKFGVEQELDLIAASFVRCNEDIDSMRKVLESFGRPNMPIIAKIENHLGVQNFQEIARAADGIMIARGDLGIELSIVEVPGLQKFMARASRETGRFCITATQMLESMIRNPLPTRAEVSDVANAIYDGTSAVMLSGETALGAHPVHAVKTMRSIIQETEKTFDYHAFFQLNDKNSALKVSPYLEAIGFSGIQIAEKASAKAIIVYTQTGGSPMFLSKYRPYLPIIAVTPNRNVYYRLAVEWGVYPMLTLESNRTVWRHQACVYGVEKGILSNYDKILVFSRGAGMQDTNNLTLTTVHDVLSPSLDEIVP</sequence>
<protein>
    <recommendedName>
        <fullName>Pyruvate kinase</fullName>
        <shortName>PK</shortName>
        <ecNumber>2.7.1.40</ecNumber>
    </recommendedName>
</protein>
<feature type="chain" id="PRO_0000112063" description="Pyruvate kinase">
    <location>
        <begin position="1"/>
        <end position="485"/>
    </location>
</feature>
<feature type="binding site" evidence="1">
    <location>
        <position position="33"/>
    </location>
    <ligand>
        <name>substrate</name>
    </ligand>
</feature>
<feature type="binding site" evidence="2">
    <location>
        <begin position="35"/>
        <end position="38"/>
    </location>
    <ligand>
        <name>ATP</name>
        <dbReference type="ChEBI" id="CHEBI:30616"/>
    </ligand>
</feature>
<feature type="binding site" evidence="1">
    <location>
        <position position="35"/>
    </location>
    <ligand>
        <name>K(+)</name>
        <dbReference type="ChEBI" id="CHEBI:29103"/>
    </ligand>
</feature>
<feature type="binding site" evidence="1">
    <location>
        <position position="37"/>
    </location>
    <ligand>
        <name>K(+)</name>
        <dbReference type="ChEBI" id="CHEBI:29103"/>
    </ligand>
</feature>
<feature type="binding site" evidence="1">
    <location>
        <position position="67"/>
    </location>
    <ligand>
        <name>K(+)</name>
        <dbReference type="ChEBI" id="CHEBI:29103"/>
    </ligand>
</feature>
<feature type="binding site" evidence="1">
    <location>
        <position position="68"/>
    </location>
    <ligand>
        <name>K(+)</name>
        <dbReference type="ChEBI" id="CHEBI:29103"/>
    </ligand>
</feature>
<feature type="binding site" evidence="2">
    <location>
        <position position="74"/>
    </location>
    <ligand>
        <name>ATP</name>
        <dbReference type="ChEBI" id="CHEBI:30616"/>
    </ligand>
</feature>
<feature type="binding site" evidence="2">
    <location>
        <position position="155"/>
    </location>
    <ligand>
        <name>ATP</name>
        <dbReference type="ChEBI" id="CHEBI:30616"/>
    </ligand>
</feature>
<feature type="binding site" evidence="1">
    <location>
        <position position="221"/>
    </location>
    <ligand>
        <name>Mg(2+)</name>
        <dbReference type="ChEBI" id="CHEBI:18420"/>
    </ligand>
</feature>
<feature type="binding site" evidence="1">
    <location>
        <position position="244"/>
    </location>
    <ligand>
        <name>substrate</name>
    </ligand>
</feature>
<feature type="binding site" evidence="1">
    <location>
        <position position="245"/>
    </location>
    <ligand>
        <name>Mg(2+)</name>
        <dbReference type="ChEBI" id="CHEBI:18420"/>
    </ligand>
</feature>
<feature type="binding site" evidence="1">
    <location>
        <position position="245"/>
    </location>
    <ligand>
        <name>substrate</name>
    </ligand>
</feature>
<feature type="binding site" evidence="1">
    <location>
        <position position="277"/>
    </location>
    <ligand>
        <name>substrate</name>
    </ligand>
</feature>
<feature type="site" description="Transition state stabilizer" evidence="1">
    <location>
        <position position="219"/>
    </location>
</feature>
<keyword id="KW-0067">ATP-binding</keyword>
<keyword id="KW-0324">Glycolysis</keyword>
<keyword id="KW-0418">Kinase</keyword>
<keyword id="KW-0460">Magnesium</keyword>
<keyword id="KW-0479">Metal-binding</keyword>
<keyword id="KW-0547">Nucleotide-binding</keyword>
<keyword id="KW-0630">Potassium</keyword>
<keyword id="KW-0670">Pyruvate</keyword>
<keyword id="KW-1185">Reference proteome</keyword>
<keyword id="KW-0808">Transferase</keyword>
<proteinExistence type="inferred from homology"/>
<dbReference type="EC" id="2.7.1.40"/>
<dbReference type="EMBL" id="AE001273">
    <property type="protein sequence ID" value="AAC67927.1"/>
    <property type="molecule type" value="Genomic_DNA"/>
</dbReference>
<dbReference type="PIR" id="G71527">
    <property type="entry name" value="G71527"/>
</dbReference>
<dbReference type="RefSeq" id="NP_219839.1">
    <property type="nucleotide sequence ID" value="NC_000117.1"/>
</dbReference>
<dbReference type="RefSeq" id="WP_009872569.1">
    <property type="nucleotide sequence ID" value="NC_000117.1"/>
</dbReference>
<dbReference type="SMR" id="P0CE21"/>
<dbReference type="FunCoup" id="P0CE21">
    <property type="interactions" value="186"/>
</dbReference>
<dbReference type="STRING" id="272561.CT_332"/>
<dbReference type="EnsemblBacteria" id="AAC67927">
    <property type="protein sequence ID" value="AAC67927"/>
    <property type="gene ID" value="CT_332"/>
</dbReference>
<dbReference type="GeneID" id="884787"/>
<dbReference type="KEGG" id="ctr:CT_332"/>
<dbReference type="PATRIC" id="fig|272561.5.peg.358"/>
<dbReference type="HOGENOM" id="CLU_015439_0_2_0"/>
<dbReference type="InParanoid" id="P0CE21"/>
<dbReference type="OrthoDB" id="9812123at2"/>
<dbReference type="UniPathway" id="UPA00109">
    <property type="reaction ID" value="UER00188"/>
</dbReference>
<dbReference type="Proteomes" id="UP000000431">
    <property type="component" value="Chromosome"/>
</dbReference>
<dbReference type="GO" id="GO:0005737">
    <property type="term" value="C:cytoplasm"/>
    <property type="evidence" value="ECO:0000318"/>
    <property type="project" value="GO_Central"/>
</dbReference>
<dbReference type="GO" id="GO:0005829">
    <property type="term" value="C:cytosol"/>
    <property type="evidence" value="ECO:0000318"/>
    <property type="project" value="GO_Central"/>
</dbReference>
<dbReference type="GO" id="GO:0005524">
    <property type="term" value="F:ATP binding"/>
    <property type="evidence" value="ECO:0007669"/>
    <property type="project" value="UniProtKB-KW"/>
</dbReference>
<dbReference type="GO" id="GO:0016301">
    <property type="term" value="F:kinase activity"/>
    <property type="evidence" value="ECO:0007669"/>
    <property type="project" value="UniProtKB-KW"/>
</dbReference>
<dbReference type="GO" id="GO:0000287">
    <property type="term" value="F:magnesium ion binding"/>
    <property type="evidence" value="ECO:0007669"/>
    <property type="project" value="InterPro"/>
</dbReference>
<dbReference type="GO" id="GO:0030955">
    <property type="term" value="F:potassium ion binding"/>
    <property type="evidence" value="ECO:0007669"/>
    <property type="project" value="InterPro"/>
</dbReference>
<dbReference type="GO" id="GO:0004743">
    <property type="term" value="F:pyruvate kinase activity"/>
    <property type="evidence" value="ECO:0000318"/>
    <property type="project" value="GO_Central"/>
</dbReference>
<dbReference type="GO" id="GO:0006096">
    <property type="term" value="P:glycolytic process"/>
    <property type="evidence" value="ECO:0000318"/>
    <property type="project" value="GO_Central"/>
</dbReference>
<dbReference type="Gene3D" id="3.20.20.60">
    <property type="entry name" value="Phosphoenolpyruvate-binding domains"/>
    <property type="match status" value="1"/>
</dbReference>
<dbReference type="Gene3D" id="2.40.33.10">
    <property type="entry name" value="PK beta-barrel domain-like"/>
    <property type="match status" value="1"/>
</dbReference>
<dbReference type="Gene3D" id="3.40.1380.20">
    <property type="entry name" value="Pyruvate kinase, C-terminal domain"/>
    <property type="match status" value="1"/>
</dbReference>
<dbReference type="InterPro" id="IPR001697">
    <property type="entry name" value="Pyr_Knase"/>
</dbReference>
<dbReference type="InterPro" id="IPR015813">
    <property type="entry name" value="Pyrv/PenolPyrv_kinase-like_dom"/>
</dbReference>
<dbReference type="InterPro" id="IPR040442">
    <property type="entry name" value="Pyrv_kinase-like_dom_sf"/>
</dbReference>
<dbReference type="InterPro" id="IPR011037">
    <property type="entry name" value="Pyrv_Knase-like_insert_dom_sf"/>
</dbReference>
<dbReference type="InterPro" id="IPR015793">
    <property type="entry name" value="Pyrv_Knase_brl"/>
</dbReference>
<dbReference type="InterPro" id="IPR015795">
    <property type="entry name" value="Pyrv_Knase_C"/>
</dbReference>
<dbReference type="InterPro" id="IPR036918">
    <property type="entry name" value="Pyrv_Knase_C_sf"/>
</dbReference>
<dbReference type="InterPro" id="IPR015806">
    <property type="entry name" value="Pyrv_Knase_insert_dom_sf"/>
</dbReference>
<dbReference type="NCBIfam" id="NF004491">
    <property type="entry name" value="PRK05826.1"/>
    <property type="match status" value="1"/>
</dbReference>
<dbReference type="NCBIfam" id="NF004978">
    <property type="entry name" value="PRK06354.1"/>
    <property type="match status" value="1"/>
</dbReference>
<dbReference type="NCBIfam" id="TIGR01064">
    <property type="entry name" value="pyruv_kin"/>
    <property type="match status" value="1"/>
</dbReference>
<dbReference type="PANTHER" id="PTHR11817">
    <property type="entry name" value="PYRUVATE KINASE"/>
    <property type="match status" value="1"/>
</dbReference>
<dbReference type="Pfam" id="PF00224">
    <property type="entry name" value="PK"/>
    <property type="match status" value="1"/>
</dbReference>
<dbReference type="Pfam" id="PF02887">
    <property type="entry name" value="PK_C"/>
    <property type="match status" value="1"/>
</dbReference>
<dbReference type="PRINTS" id="PR01050">
    <property type="entry name" value="PYRUVTKNASE"/>
</dbReference>
<dbReference type="SUPFAM" id="SSF51621">
    <property type="entry name" value="Phosphoenolpyruvate/pyruvate domain"/>
    <property type="match status" value="1"/>
</dbReference>
<dbReference type="SUPFAM" id="SSF50800">
    <property type="entry name" value="PK beta-barrel domain-like"/>
    <property type="match status" value="1"/>
</dbReference>
<dbReference type="SUPFAM" id="SSF52935">
    <property type="entry name" value="PK C-terminal domain-like"/>
    <property type="match status" value="1"/>
</dbReference>
<organism>
    <name type="scientific">Chlamydia trachomatis serovar D (strain ATCC VR-885 / DSM 19411 / UW-3/Cx)</name>
    <dbReference type="NCBI Taxonomy" id="272561"/>
    <lineage>
        <taxon>Bacteria</taxon>
        <taxon>Pseudomonadati</taxon>
        <taxon>Chlamydiota</taxon>
        <taxon>Chlamydiia</taxon>
        <taxon>Chlamydiales</taxon>
        <taxon>Chlamydiaceae</taxon>
        <taxon>Chlamydia/Chlamydophila group</taxon>
        <taxon>Chlamydia</taxon>
    </lineage>
</organism>
<gene>
    <name type="primary">pyk</name>
    <name type="synonym">pykF</name>
    <name type="ordered locus">CT_332</name>
</gene>
<name>KPYK_CHLTR</name>
<comment type="catalytic activity">
    <reaction>
        <text>pyruvate + ATP = phosphoenolpyruvate + ADP + H(+)</text>
        <dbReference type="Rhea" id="RHEA:18157"/>
        <dbReference type="ChEBI" id="CHEBI:15361"/>
        <dbReference type="ChEBI" id="CHEBI:15378"/>
        <dbReference type="ChEBI" id="CHEBI:30616"/>
        <dbReference type="ChEBI" id="CHEBI:58702"/>
        <dbReference type="ChEBI" id="CHEBI:456216"/>
        <dbReference type="EC" id="2.7.1.40"/>
    </reaction>
</comment>
<comment type="cofactor">
    <cofactor evidence="1">
        <name>Mg(2+)</name>
        <dbReference type="ChEBI" id="CHEBI:18420"/>
    </cofactor>
</comment>
<comment type="cofactor">
    <cofactor evidence="1">
        <name>K(+)</name>
        <dbReference type="ChEBI" id="CHEBI:29103"/>
    </cofactor>
</comment>
<comment type="pathway">
    <text>Carbohydrate degradation; glycolysis; pyruvate from D-glyceraldehyde 3-phosphate: step 5/5.</text>
</comment>
<comment type="subunit">
    <text evidence="1">Homotetramer.</text>
</comment>
<comment type="similarity">
    <text evidence="3">Belongs to the pyruvate kinase family.</text>
</comment>